<accession>Q6GEL4</accession>
<comment type="function">
    <text evidence="1">ATP-binding (A) component of a common energy-coupling factor (ECF) ABC-transporter complex. Unlike classic ABC transporters this ECF transporter provides the energy necessary to transport a number of different substrates.</text>
</comment>
<comment type="subunit">
    <text evidence="1">Forms a stable energy-coupling factor (ECF) transporter complex composed of 2 membrane-embedded substrate-binding proteins (S component), 2 ATP-binding proteins (A component) and 2 transmembrane proteins (T component).</text>
</comment>
<comment type="subcellular location">
    <subcellularLocation>
        <location evidence="1">Cell membrane</location>
        <topology evidence="1">Peripheral membrane protein</topology>
    </subcellularLocation>
</comment>
<comment type="similarity">
    <text evidence="1">Belongs to the ABC transporter superfamily. Energy-coupling factor EcfA family.</text>
</comment>
<evidence type="ECO:0000255" key="1">
    <source>
        <dbReference type="HAMAP-Rule" id="MF_01710"/>
    </source>
</evidence>
<proteinExistence type="inferred from homology"/>
<dbReference type="EC" id="7.-.-.-" evidence="1"/>
<dbReference type="EMBL" id="BX571856">
    <property type="protein sequence ID" value="CAG41285.1"/>
    <property type="molecule type" value="Genomic_DNA"/>
</dbReference>
<dbReference type="RefSeq" id="WP_000586768.1">
    <property type="nucleotide sequence ID" value="NC_002952.2"/>
</dbReference>
<dbReference type="SMR" id="Q6GEL4"/>
<dbReference type="KEGG" id="sar:SAR2304"/>
<dbReference type="HOGENOM" id="CLU_000604_1_22_9"/>
<dbReference type="Proteomes" id="UP000000596">
    <property type="component" value="Chromosome"/>
</dbReference>
<dbReference type="GO" id="GO:0043190">
    <property type="term" value="C:ATP-binding cassette (ABC) transporter complex"/>
    <property type="evidence" value="ECO:0007669"/>
    <property type="project" value="TreeGrafter"/>
</dbReference>
<dbReference type="GO" id="GO:0005524">
    <property type="term" value="F:ATP binding"/>
    <property type="evidence" value="ECO:0007669"/>
    <property type="project" value="UniProtKB-KW"/>
</dbReference>
<dbReference type="GO" id="GO:0016887">
    <property type="term" value="F:ATP hydrolysis activity"/>
    <property type="evidence" value="ECO:0007669"/>
    <property type="project" value="InterPro"/>
</dbReference>
<dbReference type="GO" id="GO:0042626">
    <property type="term" value="F:ATPase-coupled transmembrane transporter activity"/>
    <property type="evidence" value="ECO:0007669"/>
    <property type="project" value="TreeGrafter"/>
</dbReference>
<dbReference type="CDD" id="cd03225">
    <property type="entry name" value="ABC_cobalt_CbiO_domain1"/>
    <property type="match status" value="1"/>
</dbReference>
<dbReference type="FunFam" id="3.40.50.300:FF:000224">
    <property type="entry name" value="Energy-coupling factor transporter ATP-binding protein EcfA"/>
    <property type="match status" value="1"/>
</dbReference>
<dbReference type="Gene3D" id="3.40.50.300">
    <property type="entry name" value="P-loop containing nucleotide triphosphate hydrolases"/>
    <property type="match status" value="1"/>
</dbReference>
<dbReference type="InterPro" id="IPR003593">
    <property type="entry name" value="AAA+_ATPase"/>
</dbReference>
<dbReference type="InterPro" id="IPR003439">
    <property type="entry name" value="ABC_transporter-like_ATP-bd"/>
</dbReference>
<dbReference type="InterPro" id="IPR017871">
    <property type="entry name" value="ABC_transporter-like_CS"/>
</dbReference>
<dbReference type="InterPro" id="IPR015856">
    <property type="entry name" value="ABC_transpr_CbiO/EcfA_su"/>
</dbReference>
<dbReference type="InterPro" id="IPR050095">
    <property type="entry name" value="ECF_ABC_transporter_ATP-bd"/>
</dbReference>
<dbReference type="InterPro" id="IPR030946">
    <property type="entry name" value="EcfA2"/>
</dbReference>
<dbReference type="InterPro" id="IPR027417">
    <property type="entry name" value="P-loop_NTPase"/>
</dbReference>
<dbReference type="NCBIfam" id="TIGR04521">
    <property type="entry name" value="ECF_ATPase_2"/>
    <property type="match status" value="1"/>
</dbReference>
<dbReference type="NCBIfam" id="NF010166">
    <property type="entry name" value="PRK13646.1"/>
    <property type="match status" value="1"/>
</dbReference>
<dbReference type="PANTHER" id="PTHR43553:SF27">
    <property type="entry name" value="ENERGY-COUPLING FACTOR TRANSPORTER ATP-BINDING PROTEIN ECFA2"/>
    <property type="match status" value="1"/>
</dbReference>
<dbReference type="PANTHER" id="PTHR43553">
    <property type="entry name" value="HEAVY METAL TRANSPORTER"/>
    <property type="match status" value="1"/>
</dbReference>
<dbReference type="Pfam" id="PF00005">
    <property type="entry name" value="ABC_tran"/>
    <property type="match status" value="1"/>
</dbReference>
<dbReference type="SMART" id="SM00382">
    <property type="entry name" value="AAA"/>
    <property type="match status" value="1"/>
</dbReference>
<dbReference type="SUPFAM" id="SSF52540">
    <property type="entry name" value="P-loop containing nucleoside triphosphate hydrolases"/>
    <property type="match status" value="1"/>
</dbReference>
<dbReference type="PROSITE" id="PS00211">
    <property type="entry name" value="ABC_TRANSPORTER_1"/>
    <property type="match status" value="1"/>
</dbReference>
<dbReference type="PROSITE" id="PS50893">
    <property type="entry name" value="ABC_TRANSPORTER_2"/>
    <property type="match status" value="1"/>
</dbReference>
<dbReference type="PROSITE" id="PS51246">
    <property type="entry name" value="CBIO"/>
    <property type="match status" value="1"/>
</dbReference>
<feature type="chain" id="PRO_0000092071" description="Energy-coupling factor transporter ATP-binding protein EcfA2">
    <location>
        <begin position="1"/>
        <end position="286"/>
    </location>
</feature>
<feature type="domain" description="ABC transporter" evidence="1">
    <location>
        <begin position="3"/>
        <end position="246"/>
    </location>
</feature>
<feature type="binding site" evidence="1">
    <location>
        <begin position="40"/>
        <end position="47"/>
    </location>
    <ligand>
        <name>ATP</name>
        <dbReference type="ChEBI" id="CHEBI:30616"/>
    </ligand>
</feature>
<keyword id="KW-0067">ATP-binding</keyword>
<keyword id="KW-1003">Cell membrane</keyword>
<keyword id="KW-0472">Membrane</keyword>
<keyword id="KW-0547">Nucleotide-binding</keyword>
<keyword id="KW-1278">Translocase</keyword>
<keyword id="KW-0813">Transport</keyword>
<gene>
    <name evidence="1" type="primary">ecfA2</name>
    <name type="synonym">cbiO2</name>
    <name type="ordered locus">SAR2304</name>
</gene>
<organism>
    <name type="scientific">Staphylococcus aureus (strain MRSA252)</name>
    <dbReference type="NCBI Taxonomy" id="282458"/>
    <lineage>
        <taxon>Bacteria</taxon>
        <taxon>Bacillati</taxon>
        <taxon>Bacillota</taxon>
        <taxon>Bacilli</taxon>
        <taxon>Bacillales</taxon>
        <taxon>Staphylococcaceae</taxon>
        <taxon>Staphylococcus</taxon>
    </lineage>
</organism>
<reference key="1">
    <citation type="journal article" date="2004" name="Proc. Natl. Acad. Sci. U.S.A.">
        <title>Complete genomes of two clinical Staphylococcus aureus strains: evidence for the rapid evolution of virulence and drug resistance.</title>
        <authorList>
            <person name="Holden M.T.G."/>
            <person name="Feil E.J."/>
            <person name="Lindsay J.A."/>
            <person name="Peacock S.J."/>
            <person name="Day N.P.J."/>
            <person name="Enright M.C."/>
            <person name="Foster T.J."/>
            <person name="Moore C.E."/>
            <person name="Hurst L."/>
            <person name="Atkin R."/>
            <person name="Barron A."/>
            <person name="Bason N."/>
            <person name="Bentley S.D."/>
            <person name="Chillingworth C."/>
            <person name="Chillingworth T."/>
            <person name="Churcher C."/>
            <person name="Clark L."/>
            <person name="Corton C."/>
            <person name="Cronin A."/>
            <person name="Doggett J."/>
            <person name="Dowd L."/>
            <person name="Feltwell T."/>
            <person name="Hance Z."/>
            <person name="Harris B."/>
            <person name="Hauser H."/>
            <person name="Holroyd S."/>
            <person name="Jagels K."/>
            <person name="James K.D."/>
            <person name="Lennard N."/>
            <person name="Line A."/>
            <person name="Mayes R."/>
            <person name="Moule S."/>
            <person name="Mungall K."/>
            <person name="Ormond D."/>
            <person name="Quail M.A."/>
            <person name="Rabbinowitsch E."/>
            <person name="Rutherford K.M."/>
            <person name="Sanders M."/>
            <person name="Sharp S."/>
            <person name="Simmonds M."/>
            <person name="Stevens K."/>
            <person name="Whitehead S."/>
            <person name="Barrell B.G."/>
            <person name="Spratt B.G."/>
            <person name="Parkhill J."/>
        </authorList>
    </citation>
    <scope>NUCLEOTIDE SEQUENCE [LARGE SCALE GENOMIC DNA]</scope>
    <source>
        <strain>MRSA252</strain>
    </source>
</reference>
<sequence>MIIRFDNVSYTYQKGTPYQHQAIHDVNTEFEQGKYYAIVGQTGSGKSTLIQNINALLKPTTGTVTVDDITITHKTKDKYIRPVRKRIGMVFQFPESQLFEDTVEREMIFGPKNFKMNLDEAKNYAHRLLMDLGFSRDVMSQSPFQMSGGQMRKIAIVSILAMNPDIIVVDEPTAGLDPQSKRQVMRLLKSLQTDENKTIILISHDMNEVARYADEVIVMKEGSIVSQTSPKELFKDKEKLADWHIGLPEIVQLQYDFEQKHQTKLKDIALTEEAFVSLYKEWQHEK</sequence>
<name>ECFA2_STAAR</name>
<protein>
    <recommendedName>
        <fullName evidence="1">Energy-coupling factor transporter ATP-binding protein EcfA2</fullName>
        <shortName evidence="1">ECF transporter A component EcfA2</shortName>
        <ecNumber evidence="1">7.-.-.-</ecNumber>
    </recommendedName>
</protein>